<evidence type="ECO:0000250" key="1"/>
<evidence type="ECO:0000255" key="2">
    <source>
        <dbReference type="PROSITE-ProRule" id="PRU00541"/>
    </source>
</evidence>
<evidence type="ECO:0000255" key="3">
    <source>
        <dbReference type="PROSITE-ProRule" id="PRU00542"/>
    </source>
</evidence>
<evidence type="ECO:0000256" key="4">
    <source>
        <dbReference type="SAM" id="MobiDB-lite"/>
    </source>
</evidence>
<evidence type="ECO:0000305" key="5"/>
<reference key="1">
    <citation type="journal article" date="2004" name="Nature">
        <title>Genome evolution in yeasts.</title>
        <authorList>
            <person name="Dujon B."/>
            <person name="Sherman D."/>
            <person name="Fischer G."/>
            <person name="Durrens P."/>
            <person name="Casaregola S."/>
            <person name="Lafontaine I."/>
            <person name="de Montigny J."/>
            <person name="Marck C."/>
            <person name="Neuveglise C."/>
            <person name="Talla E."/>
            <person name="Goffard N."/>
            <person name="Frangeul L."/>
            <person name="Aigle M."/>
            <person name="Anthouard V."/>
            <person name="Babour A."/>
            <person name="Barbe V."/>
            <person name="Barnay S."/>
            <person name="Blanchin S."/>
            <person name="Beckerich J.-M."/>
            <person name="Beyne E."/>
            <person name="Bleykasten C."/>
            <person name="Boisrame A."/>
            <person name="Boyer J."/>
            <person name="Cattolico L."/>
            <person name="Confanioleri F."/>
            <person name="de Daruvar A."/>
            <person name="Despons L."/>
            <person name="Fabre E."/>
            <person name="Fairhead C."/>
            <person name="Ferry-Dumazet H."/>
            <person name="Groppi A."/>
            <person name="Hantraye F."/>
            <person name="Hennequin C."/>
            <person name="Jauniaux N."/>
            <person name="Joyet P."/>
            <person name="Kachouri R."/>
            <person name="Kerrest A."/>
            <person name="Koszul R."/>
            <person name="Lemaire M."/>
            <person name="Lesur I."/>
            <person name="Ma L."/>
            <person name="Muller H."/>
            <person name="Nicaud J.-M."/>
            <person name="Nikolski M."/>
            <person name="Oztas S."/>
            <person name="Ozier-Kalogeropoulos O."/>
            <person name="Pellenz S."/>
            <person name="Potier S."/>
            <person name="Richard G.-F."/>
            <person name="Straub M.-L."/>
            <person name="Suleau A."/>
            <person name="Swennen D."/>
            <person name="Tekaia F."/>
            <person name="Wesolowski-Louvel M."/>
            <person name="Westhof E."/>
            <person name="Wirth B."/>
            <person name="Zeniou-Meyer M."/>
            <person name="Zivanovic Y."/>
            <person name="Bolotin-Fukuhara M."/>
            <person name="Thierry A."/>
            <person name="Bouchier C."/>
            <person name="Caudron B."/>
            <person name="Scarpelli C."/>
            <person name="Gaillardin C."/>
            <person name="Weissenbach J."/>
            <person name="Wincker P."/>
            <person name="Souciet J.-L."/>
        </authorList>
    </citation>
    <scope>NUCLEOTIDE SEQUENCE [LARGE SCALE GENOMIC DNA]</scope>
    <source>
        <strain>ATCC 36239 / CBS 767 / BCRC 21394 / JCM 1990 / NBRC 0083 / IGC 2968</strain>
    </source>
</reference>
<accession>Q6BLM5</accession>
<comment type="function">
    <text evidence="1">ATP-binding RNA helicase involved in the biogenesis of 60S ribosomal subunits and is required for the normal formation of 25S and 5.8S rRNAs.</text>
</comment>
<comment type="catalytic activity">
    <reaction>
        <text>ATP + H2O = ADP + phosphate + H(+)</text>
        <dbReference type="Rhea" id="RHEA:13065"/>
        <dbReference type="ChEBI" id="CHEBI:15377"/>
        <dbReference type="ChEBI" id="CHEBI:15378"/>
        <dbReference type="ChEBI" id="CHEBI:30616"/>
        <dbReference type="ChEBI" id="CHEBI:43474"/>
        <dbReference type="ChEBI" id="CHEBI:456216"/>
        <dbReference type="EC" id="3.6.4.13"/>
    </reaction>
</comment>
<comment type="subcellular location">
    <subcellularLocation>
        <location evidence="1">Nucleus</location>
        <location evidence="1">Nucleolus</location>
    </subcellularLocation>
</comment>
<comment type="domain">
    <text>The Q motif is unique to and characteristic of the DEAD box family of RNA helicases and controls ATP binding and hydrolysis.</text>
</comment>
<comment type="similarity">
    <text evidence="5">Belongs to the DEAD box helicase family. DDX56/DBP9 subfamily.</text>
</comment>
<proteinExistence type="inferred from homology"/>
<protein>
    <recommendedName>
        <fullName>ATP-dependent RNA helicase DBP9</fullName>
        <ecNumber>3.6.4.13</ecNumber>
    </recommendedName>
</protein>
<gene>
    <name type="primary">DBP9</name>
    <name type="ordered locus">DEHA2F12232g</name>
</gene>
<dbReference type="EC" id="3.6.4.13"/>
<dbReference type="EMBL" id="CR382138">
    <property type="protein sequence ID" value="CAG89246.1"/>
    <property type="molecule type" value="Genomic_DNA"/>
</dbReference>
<dbReference type="RefSeq" id="XP_460896.1">
    <property type="nucleotide sequence ID" value="XM_460896.1"/>
</dbReference>
<dbReference type="SMR" id="Q6BLM5"/>
<dbReference type="FunCoup" id="Q6BLM5">
    <property type="interactions" value="1055"/>
</dbReference>
<dbReference type="STRING" id="284592.Q6BLM5"/>
<dbReference type="GeneID" id="2904187"/>
<dbReference type="KEGG" id="dha:DEHA2F12232g"/>
<dbReference type="VEuPathDB" id="FungiDB:DEHA2F12232g"/>
<dbReference type="eggNOG" id="KOG0346">
    <property type="taxonomic scope" value="Eukaryota"/>
</dbReference>
<dbReference type="HOGENOM" id="CLU_003041_17_1_1"/>
<dbReference type="InParanoid" id="Q6BLM5"/>
<dbReference type="OMA" id="NASEQCV"/>
<dbReference type="OrthoDB" id="1191041at2759"/>
<dbReference type="Proteomes" id="UP000000599">
    <property type="component" value="Chromosome F"/>
</dbReference>
<dbReference type="GO" id="GO:0005829">
    <property type="term" value="C:cytosol"/>
    <property type="evidence" value="ECO:0007669"/>
    <property type="project" value="TreeGrafter"/>
</dbReference>
<dbReference type="GO" id="GO:0005730">
    <property type="term" value="C:nucleolus"/>
    <property type="evidence" value="ECO:0007669"/>
    <property type="project" value="UniProtKB-SubCell"/>
</dbReference>
<dbReference type="GO" id="GO:0005524">
    <property type="term" value="F:ATP binding"/>
    <property type="evidence" value="ECO:0007669"/>
    <property type="project" value="UniProtKB-KW"/>
</dbReference>
<dbReference type="GO" id="GO:0016887">
    <property type="term" value="F:ATP hydrolysis activity"/>
    <property type="evidence" value="ECO:0007669"/>
    <property type="project" value="RHEA"/>
</dbReference>
<dbReference type="GO" id="GO:0003678">
    <property type="term" value="F:DNA helicase activity"/>
    <property type="evidence" value="ECO:0007669"/>
    <property type="project" value="EnsemblFungi"/>
</dbReference>
<dbReference type="GO" id="GO:0033677">
    <property type="term" value="F:DNA/RNA helicase activity"/>
    <property type="evidence" value="ECO:0007669"/>
    <property type="project" value="EnsemblFungi"/>
</dbReference>
<dbReference type="GO" id="GO:0003723">
    <property type="term" value="F:RNA binding"/>
    <property type="evidence" value="ECO:0007669"/>
    <property type="project" value="UniProtKB-KW"/>
</dbReference>
<dbReference type="GO" id="GO:0003724">
    <property type="term" value="F:RNA helicase activity"/>
    <property type="evidence" value="ECO:0007669"/>
    <property type="project" value="UniProtKB-EC"/>
</dbReference>
<dbReference type="GO" id="GO:0000463">
    <property type="term" value="P:maturation of LSU-rRNA from tricistronic rRNA transcript (SSU-rRNA, 5.8S rRNA, LSU-rRNA)"/>
    <property type="evidence" value="ECO:0007669"/>
    <property type="project" value="EnsemblFungi"/>
</dbReference>
<dbReference type="CDD" id="cd17961">
    <property type="entry name" value="DEADc_DDX56"/>
    <property type="match status" value="1"/>
</dbReference>
<dbReference type="CDD" id="cd18787">
    <property type="entry name" value="SF2_C_DEAD"/>
    <property type="match status" value="1"/>
</dbReference>
<dbReference type="Gene3D" id="3.40.50.300">
    <property type="entry name" value="P-loop containing nucleotide triphosphate hydrolases"/>
    <property type="match status" value="2"/>
</dbReference>
<dbReference type="InterPro" id="IPR011545">
    <property type="entry name" value="DEAD/DEAH_box_helicase_dom"/>
</dbReference>
<dbReference type="InterPro" id="IPR050079">
    <property type="entry name" value="DEAD_box_RNA_helicase"/>
</dbReference>
<dbReference type="InterPro" id="IPR014001">
    <property type="entry name" value="Helicase_ATP-bd"/>
</dbReference>
<dbReference type="InterPro" id="IPR001650">
    <property type="entry name" value="Helicase_C-like"/>
</dbReference>
<dbReference type="InterPro" id="IPR027417">
    <property type="entry name" value="P-loop_NTPase"/>
</dbReference>
<dbReference type="InterPro" id="IPR014014">
    <property type="entry name" value="RNA_helicase_DEAD_Q_motif"/>
</dbReference>
<dbReference type="PANTHER" id="PTHR47959">
    <property type="entry name" value="ATP-DEPENDENT RNA HELICASE RHLE-RELATED"/>
    <property type="match status" value="1"/>
</dbReference>
<dbReference type="PANTHER" id="PTHR47959:SF21">
    <property type="entry name" value="DEAD-BOX HELICASE 56"/>
    <property type="match status" value="1"/>
</dbReference>
<dbReference type="Pfam" id="PF00270">
    <property type="entry name" value="DEAD"/>
    <property type="match status" value="1"/>
</dbReference>
<dbReference type="Pfam" id="PF00271">
    <property type="entry name" value="Helicase_C"/>
    <property type="match status" value="2"/>
</dbReference>
<dbReference type="SMART" id="SM00487">
    <property type="entry name" value="DEXDc"/>
    <property type="match status" value="1"/>
</dbReference>
<dbReference type="SMART" id="SM00490">
    <property type="entry name" value="HELICc"/>
    <property type="match status" value="1"/>
</dbReference>
<dbReference type="SUPFAM" id="SSF52540">
    <property type="entry name" value="P-loop containing nucleoside triphosphate hydrolases"/>
    <property type="match status" value="2"/>
</dbReference>
<dbReference type="PROSITE" id="PS51192">
    <property type="entry name" value="HELICASE_ATP_BIND_1"/>
    <property type="match status" value="1"/>
</dbReference>
<dbReference type="PROSITE" id="PS51194">
    <property type="entry name" value="HELICASE_CTER"/>
    <property type="match status" value="1"/>
</dbReference>
<dbReference type="PROSITE" id="PS51195">
    <property type="entry name" value="Q_MOTIF"/>
    <property type="match status" value="1"/>
</dbReference>
<feature type="chain" id="PRO_0000232340" description="ATP-dependent RNA helicase DBP9">
    <location>
        <begin position="1"/>
        <end position="586"/>
    </location>
</feature>
<feature type="domain" description="Helicase ATP-binding" evidence="2">
    <location>
        <begin position="53"/>
        <end position="234"/>
    </location>
</feature>
<feature type="domain" description="Helicase C-terminal" evidence="3">
    <location>
        <begin position="245"/>
        <end position="467"/>
    </location>
</feature>
<feature type="region of interest" description="Disordered" evidence="4">
    <location>
        <begin position="339"/>
        <end position="375"/>
    </location>
</feature>
<feature type="region of interest" description="Disordered" evidence="4">
    <location>
        <begin position="560"/>
        <end position="586"/>
    </location>
</feature>
<feature type="short sequence motif" description="Q motif">
    <location>
        <begin position="21"/>
        <end position="49"/>
    </location>
</feature>
<feature type="short sequence motif" description="DEAD box">
    <location>
        <begin position="180"/>
        <end position="183"/>
    </location>
</feature>
<feature type="compositionally biased region" description="Acidic residues" evidence="4">
    <location>
        <begin position="339"/>
        <end position="349"/>
    </location>
</feature>
<feature type="compositionally biased region" description="Basic and acidic residues" evidence="4">
    <location>
        <begin position="350"/>
        <end position="360"/>
    </location>
</feature>
<feature type="compositionally biased region" description="Basic residues" evidence="4">
    <location>
        <begin position="560"/>
        <end position="574"/>
    </location>
</feature>
<feature type="compositionally biased region" description="Basic and acidic residues" evidence="4">
    <location>
        <begin position="575"/>
        <end position="586"/>
    </location>
</feature>
<feature type="binding site" evidence="2">
    <location>
        <begin position="66"/>
        <end position="73"/>
    </location>
    <ligand>
        <name>ATP</name>
        <dbReference type="ChEBI" id="CHEBI:30616"/>
    </ligand>
</feature>
<sequence length="586" mass="66893">MGQDKKNLTAAAAAAYVDDSTTWESFGLDARLLQAIDQLGFENPTLIQSSAIPLAIEEKRDIIAKASTGSGKTAAYSIPIIQNLLQDESTEREIKSIILVPTRELSNQVSQFLEKLLIFCNSKIRLINISSNLSDQVINSLLINKPEIIVSTPAKLIQILEKNVNSNLINLSTVKNLTIDEVDLVLSYGYLEDLQKLESYLPIKKNLQTFLMSATINDDLNDIKSKFCSRPAILKLNDEDSNQNNLVQYYAKTTEFDKFLLTYVIFKLNLIKGKTLVFVNNIDRGYRLKLFLEQFGVRCCILNSELPINSRLNIVEQYNKNVYNLLIATDETNDFTIQEDEKDEGEEIEENKNEENDGKTSKNTKKPNQKKDKEYGVSRGVDFRNVACVLNFDLPTSSKSYIHRVGRTARAGKSGMALSFVLPLNEFGKHKTASLSTAKKDEKVLRRIVRQQSNNGFEIKPYQFDMKQVEGFRYRAEDAFRAVTQSAVREARIKELKNELVNSDKLKRFFEENPQDLASLRHDKELHPTRVQTHLKRVPEYLLPESARADHKKIGFVPFHKNKVHKNRKRKPSGRKPDPLKSFRPK</sequence>
<name>DBP9_DEBHA</name>
<organism>
    <name type="scientific">Debaryomyces hansenii (strain ATCC 36239 / CBS 767 / BCRC 21394 / JCM 1990 / NBRC 0083 / IGC 2968)</name>
    <name type="common">Yeast</name>
    <name type="synonym">Torulaspora hansenii</name>
    <dbReference type="NCBI Taxonomy" id="284592"/>
    <lineage>
        <taxon>Eukaryota</taxon>
        <taxon>Fungi</taxon>
        <taxon>Dikarya</taxon>
        <taxon>Ascomycota</taxon>
        <taxon>Saccharomycotina</taxon>
        <taxon>Pichiomycetes</taxon>
        <taxon>Debaryomycetaceae</taxon>
        <taxon>Debaryomyces</taxon>
    </lineage>
</organism>
<keyword id="KW-0067">ATP-binding</keyword>
<keyword id="KW-0347">Helicase</keyword>
<keyword id="KW-0378">Hydrolase</keyword>
<keyword id="KW-0547">Nucleotide-binding</keyword>
<keyword id="KW-0539">Nucleus</keyword>
<keyword id="KW-1185">Reference proteome</keyword>
<keyword id="KW-0690">Ribosome biogenesis</keyword>
<keyword id="KW-0694">RNA-binding</keyword>
<keyword id="KW-0698">rRNA processing</keyword>